<feature type="chain" id="PRO_0000062357" description="Ribulose bisphosphate carboxylase large chain">
    <location>
        <begin position="1" status="less than"/>
        <end position="468"/>
    </location>
</feature>
<feature type="active site" description="Proton acceptor" evidence="1">
    <location>
        <position position="166"/>
    </location>
</feature>
<feature type="active site" description="Proton acceptor" evidence="1">
    <location>
        <position position="285"/>
    </location>
</feature>
<feature type="binding site" description="in homodimeric partner" evidence="1">
    <location>
        <position position="114"/>
    </location>
    <ligand>
        <name>substrate</name>
    </ligand>
</feature>
<feature type="binding site" evidence="1">
    <location>
        <position position="164"/>
    </location>
    <ligand>
        <name>substrate</name>
    </ligand>
</feature>
<feature type="binding site" evidence="1">
    <location>
        <position position="168"/>
    </location>
    <ligand>
        <name>substrate</name>
    </ligand>
</feature>
<feature type="binding site" description="via carbamate group" evidence="1">
    <location>
        <position position="192"/>
    </location>
    <ligand>
        <name>Mg(2+)</name>
        <dbReference type="ChEBI" id="CHEBI:18420"/>
    </ligand>
</feature>
<feature type="binding site" evidence="1">
    <location>
        <position position="194"/>
    </location>
    <ligand>
        <name>Mg(2+)</name>
        <dbReference type="ChEBI" id="CHEBI:18420"/>
    </ligand>
</feature>
<feature type="binding site" evidence="1">
    <location>
        <position position="195"/>
    </location>
    <ligand>
        <name>Mg(2+)</name>
        <dbReference type="ChEBI" id="CHEBI:18420"/>
    </ligand>
</feature>
<feature type="binding site" evidence="1">
    <location>
        <position position="286"/>
    </location>
    <ligand>
        <name>substrate</name>
    </ligand>
</feature>
<feature type="binding site" evidence="1">
    <location>
        <position position="318"/>
    </location>
    <ligand>
        <name>substrate</name>
    </ligand>
</feature>
<feature type="binding site" evidence="1">
    <location>
        <position position="370"/>
    </location>
    <ligand>
        <name>substrate</name>
    </ligand>
</feature>
<feature type="site" description="Transition state stabilizer" evidence="1">
    <location>
        <position position="325"/>
    </location>
</feature>
<feature type="modified residue" description="N6,N6,N6-trimethyllysine" evidence="1">
    <location>
        <position position="5"/>
    </location>
</feature>
<feature type="modified residue" description="N6-carboxylysine" evidence="1">
    <location>
        <position position="192"/>
    </location>
</feature>
<feature type="disulfide bond" description="Interchain; in linked form" evidence="1">
    <location>
        <position position="238"/>
    </location>
</feature>
<feature type="non-terminal residue">
    <location>
        <position position="1"/>
    </location>
</feature>
<geneLocation type="chloroplast"/>
<evidence type="ECO:0000255" key="1">
    <source>
        <dbReference type="HAMAP-Rule" id="MF_01338"/>
    </source>
</evidence>
<sequence length="468" mass="51866">SVGFKAGVKEYKLTYYTPEYQTKDTDILAAFRVTPQPGVPPEEAGAAVAAESSTGTWTTVWTDGLTSLDRYKGRCYRIERVVGEKDQYIAYVAYPLDLFEEGSVTNMFTSIVGNVFGFKALRALRLEDLRIPPAYVKTFQGPPHGIQVERDKLNKYGRPLLGCTIKPKLGLSAKNYGRAVYECLRGGLDFTKDDENVNSQPFMRWRDRFLFCAEALYKAQAETGEIKGHYLNATAGTCEEMIKRAVFARELGVPIVMHDYLTGGFTANTSLAHYCRDNGLLLHIHRAMHAVIDRQKNHGIHFRVLAKALRMSGGDHIHSGTVVGKLEGERDITLGFVDLLRDDFVEQDRSRGIYFTQDWVSLPGVLPVASGGIHVWHMPALTEIFGDDSVLQFGGGTLGHPWGNAPGAVANRVALEACVQARNEGRDLAQEGNAIIREACKWSPELAAACEVWKEIVFNFAAVDVLDK</sequence>
<dbReference type="EC" id="4.1.1.39" evidence="1"/>
<dbReference type="EMBL" id="U08608">
    <property type="protein sequence ID" value="AAA18383.1"/>
    <property type="molecule type" value="Genomic_DNA"/>
</dbReference>
<dbReference type="SMR" id="Q31859"/>
<dbReference type="GO" id="GO:0009507">
    <property type="term" value="C:chloroplast"/>
    <property type="evidence" value="ECO:0007669"/>
    <property type="project" value="UniProtKB-SubCell"/>
</dbReference>
<dbReference type="GO" id="GO:0000287">
    <property type="term" value="F:magnesium ion binding"/>
    <property type="evidence" value="ECO:0007669"/>
    <property type="project" value="InterPro"/>
</dbReference>
<dbReference type="GO" id="GO:0004497">
    <property type="term" value="F:monooxygenase activity"/>
    <property type="evidence" value="ECO:0007669"/>
    <property type="project" value="UniProtKB-KW"/>
</dbReference>
<dbReference type="GO" id="GO:0016984">
    <property type="term" value="F:ribulose-bisphosphate carboxylase activity"/>
    <property type="evidence" value="ECO:0007669"/>
    <property type="project" value="UniProtKB-EC"/>
</dbReference>
<dbReference type="GO" id="GO:0009853">
    <property type="term" value="P:photorespiration"/>
    <property type="evidence" value="ECO:0007669"/>
    <property type="project" value="UniProtKB-KW"/>
</dbReference>
<dbReference type="GO" id="GO:0019253">
    <property type="term" value="P:reductive pentose-phosphate cycle"/>
    <property type="evidence" value="ECO:0007669"/>
    <property type="project" value="UniProtKB-KW"/>
</dbReference>
<dbReference type="CDD" id="cd08212">
    <property type="entry name" value="RuBisCO_large_I"/>
    <property type="match status" value="1"/>
</dbReference>
<dbReference type="FunFam" id="3.20.20.110:FF:000001">
    <property type="entry name" value="Ribulose bisphosphate carboxylase large chain"/>
    <property type="match status" value="1"/>
</dbReference>
<dbReference type="FunFam" id="3.30.70.150:FF:000001">
    <property type="entry name" value="Ribulose bisphosphate carboxylase large chain"/>
    <property type="match status" value="1"/>
</dbReference>
<dbReference type="Gene3D" id="3.20.20.110">
    <property type="entry name" value="Ribulose bisphosphate carboxylase, large subunit, C-terminal domain"/>
    <property type="match status" value="1"/>
</dbReference>
<dbReference type="Gene3D" id="3.30.70.150">
    <property type="entry name" value="RuBisCO large subunit, N-terminal domain"/>
    <property type="match status" value="1"/>
</dbReference>
<dbReference type="HAMAP" id="MF_01338">
    <property type="entry name" value="RuBisCO_L_type1"/>
    <property type="match status" value="1"/>
</dbReference>
<dbReference type="InterPro" id="IPR033966">
    <property type="entry name" value="RuBisCO"/>
</dbReference>
<dbReference type="InterPro" id="IPR020878">
    <property type="entry name" value="RuBisCo_large_chain_AS"/>
</dbReference>
<dbReference type="InterPro" id="IPR000685">
    <property type="entry name" value="RuBisCO_lsu_C"/>
</dbReference>
<dbReference type="InterPro" id="IPR036376">
    <property type="entry name" value="RuBisCO_lsu_C_sf"/>
</dbReference>
<dbReference type="InterPro" id="IPR017443">
    <property type="entry name" value="RuBisCO_lsu_fd_N"/>
</dbReference>
<dbReference type="InterPro" id="IPR036422">
    <property type="entry name" value="RuBisCO_lsu_N_sf"/>
</dbReference>
<dbReference type="InterPro" id="IPR020888">
    <property type="entry name" value="RuBisCO_lsuI"/>
</dbReference>
<dbReference type="NCBIfam" id="NF003252">
    <property type="entry name" value="PRK04208.1"/>
    <property type="match status" value="1"/>
</dbReference>
<dbReference type="PANTHER" id="PTHR42704">
    <property type="entry name" value="RIBULOSE BISPHOSPHATE CARBOXYLASE"/>
    <property type="match status" value="1"/>
</dbReference>
<dbReference type="PANTHER" id="PTHR42704:SF16">
    <property type="entry name" value="RIBULOSE BISPHOSPHATE CARBOXYLASE LARGE CHAIN"/>
    <property type="match status" value="1"/>
</dbReference>
<dbReference type="Pfam" id="PF00016">
    <property type="entry name" value="RuBisCO_large"/>
    <property type="match status" value="1"/>
</dbReference>
<dbReference type="Pfam" id="PF02788">
    <property type="entry name" value="RuBisCO_large_N"/>
    <property type="match status" value="1"/>
</dbReference>
<dbReference type="SFLD" id="SFLDG01052">
    <property type="entry name" value="RuBisCO"/>
    <property type="match status" value="1"/>
</dbReference>
<dbReference type="SFLD" id="SFLDS00014">
    <property type="entry name" value="RuBisCO"/>
    <property type="match status" value="1"/>
</dbReference>
<dbReference type="SFLD" id="SFLDG00301">
    <property type="entry name" value="RuBisCO-like_proteins"/>
    <property type="match status" value="1"/>
</dbReference>
<dbReference type="SUPFAM" id="SSF51649">
    <property type="entry name" value="RuBisCo, C-terminal domain"/>
    <property type="match status" value="1"/>
</dbReference>
<dbReference type="SUPFAM" id="SSF54966">
    <property type="entry name" value="RuBisCO, large subunit, small (N-terminal) domain"/>
    <property type="match status" value="1"/>
</dbReference>
<dbReference type="PROSITE" id="PS00157">
    <property type="entry name" value="RUBISCO_LARGE"/>
    <property type="match status" value="1"/>
</dbReference>
<reference key="1">
    <citation type="journal article" date="1994" name="Syst. Biol.">
        <title>Combining data in phylogenetic systematics: an empirical approach using three molecular data sets in the Solanaceae.</title>
        <authorList>
            <person name="Olmstead R.G."/>
            <person name="Sweere J.A."/>
        </authorList>
    </citation>
    <scope>NUCLEOTIDE SEQUENCE [GENOMIC DNA]</scope>
</reference>
<organism>
    <name type="scientific">Anthocercis viscosa</name>
    <name type="common">Sticky tailflower</name>
    <dbReference type="NCBI Taxonomy" id="33112"/>
    <lineage>
        <taxon>Eukaryota</taxon>
        <taxon>Viridiplantae</taxon>
        <taxon>Streptophyta</taxon>
        <taxon>Embryophyta</taxon>
        <taxon>Tracheophyta</taxon>
        <taxon>Spermatophyta</taxon>
        <taxon>Magnoliopsida</taxon>
        <taxon>eudicotyledons</taxon>
        <taxon>Gunneridae</taxon>
        <taxon>Pentapetalae</taxon>
        <taxon>asterids</taxon>
        <taxon>lamiids</taxon>
        <taxon>Solanales</taxon>
        <taxon>Solanaceae</taxon>
        <taxon>Nicotianoideae</taxon>
        <taxon>Anthocercideae</taxon>
        <taxon>Anthocercis</taxon>
    </lineage>
</organism>
<proteinExistence type="inferred from homology"/>
<gene>
    <name evidence="1" type="primary">rbcL</name>
</gene>
<protein>
    <recommendedName>
        <fullName evidence="1">Ribulose bisphosphate carboxylase large chain</fullName>
        <shortName evidence="1">RuBisCO large subunit</shortName>
        <ecNumber evidence="1">4.1.1.39</ecNumber>
    </recommendedName>
</protein>
<keyword id="KW-0113">Calvin cycle</keyword>
<keyword id="KW-0120">Carbon dioxide fixation</keyword>
<keyword id="KW-0150">Chloroplast</keyword>
<keyword id="KW-1015">Disulfide bond</keyword>
<keyword id="KW-0456">Lyase</keyword>
<keyword id="KW-0460">Magnesium</keyword>
<keyword id="KW-0479">Metal-binding</keyword>
<keyword id="KW-0488">Methylation</keyword>
<keyword id="KW-0503">Monooxygenase</keyword>
<keyword id="KW-0560">Oxidoreductase</keyword>
<keyword id="KW-0601">Photorespiration</keyword>
<keyword id="KW-0602">Photosynthesis</keyword>
<keyword id="KW-0934">Plastid</keyword>
<name>RBL_ANTVS</name>
<accession>Q31859</accession>
<comment type="function">
    <text evidence="1">RuBisCO catalyzes two reactions: the carboxylation of D-ribulose 1,5-bisphosphate, the primary event in carbon dioxide fixation, as well as the oxidative fragmentation of the pentose substrate in the photorespiration process. Both reactions occur simultaneously and in competition at the same active site.</text>
</comment>
<comment type="catalytic activity">
    <reaction evidence="1">
        <text>2 (2R)-3-phosphoglycerate + 2 H(+) = D-ribulose 1,5-bisphosphate + CO2 + H2O</text>
        <dbReference type="Rhea" id="RHEA:23124"/>
        <dbReference type="ChEBI" id="CHEBI:15377"/>
        <dbReference type="ChEBI" id="CHEBI:15378"/>
        <dbReference type="ChEBI" id="CHEBI:16526"/>
        <dbReference type="ChEBI" id="CHEBI:57870"/>
        <dbReference type="ChEBI" id="CHEBI:58272"/>
        <dbReference type="EC" id="4.1.1.39"/>
    </reaction>
</comment>
<comment type="catalytic activity">
    <reaction evidence="1">
        <text>D-ribulose 1,5-bisphosphate + O2 = 2-phosphoglycolate + (2R)-3-phosphoglycerate + 2 H(+)</text>
        <dbReference type="Rhea" id="RHEA:36631"/>
        <dbReference type="ChEBI" id="CHEBI:15378"/>
        <dbReference type="ChEBI" id="CHEBI:15379"/>
        <dbReference type="ChEBI" id="CHEBI:57870"/>
        <dbReference type="ChEBI" id="CHEBI:58033"/>
        <dbReference type="ChEBI" id="CHEBI:58272"/>
    </reaction>
</comment>
<comment type="cofactor">
    <cofactor evidence="1">
        <name>Mg(2+)</name>
        <dbReference type="ChEBI" id="CHEBI:18420"/>
    </cofactor>
    <text evidence="1">Binds 1 Mg(2+) ion per subunit.</text>
</comment>
<comment type="subunit">
    <text evidence="1">Heterohexadecamer of 8 large chains and 8 small chains; disulfide-linked. The disulfide link is formed within the large subunit homodimers.</text>
</comment>
<comment type="subcellular location">
    <subcellularLocation>
        <location>Plastid</location>
        <location>Chloroplast</location>
    </subcellularLocation>
</comment>
<comment type="PTM">
    <text evidence="1">The disulfide bond which can form in the large chain dimeric partners within the hexadecamer appears to be associated with oxidative stress and protein turnover.</text>
</comment>
<comment type="miscellaneous">
    <text evidence="1">The basic functional RuBisCO is composed of a large chain homodimer in a 'head-to-tail' conformation. In form I RuBisCO this homodimer is arranged in a barrel-like tetramer with the small subunits forming a tetrameric 'cap' on each end of the 'barrel'.</text>
</comment>
<comment type="similarity">
    <text evidence="1">Belongs to the RuBisCO large chain family. Type I subfamily.</text>
</comment>